<name>NADD_CHLPM</name>
<sequence>MHVGVLGGTFDPPHNGHLALALFARELLCVDRLILSVSDNPLKQRRSASDSQRKAMTELLCHEINRTGTFCDACGWELEQKRPSYTVNLLRFVRSLYPSARLSLLVGEDSWRNFGSWKSPEEIEELADVVVFARGAEHMTERPDAVSGIRFVEFSCPLSSTMLRGRIAEGQSVSSLLPSSIDRYIRREGLYGE</sequence>
<dbReference type="EC" id="2.7.7.18" evidence="1"/>
<dbReference type="EMBL" id="CP000607">
    <property type="protein sequence ID" value="ABP37743.1"/>
    <property type="molecule type" value="Genomic_DNA"/>
</dbReference>
<dbReference type="SMR" id="A4SGY4"/>
<dbReference type="STRING" id="290318.Cvib_1733"/>
<dbReference type="KEGG" id="pvi:Cvib_1733"/>
<dbReference type="eggNOG" id="COG1057">
    <property type="taxonomic scope" value="Bacteria"/>
</dbReference>
<dbReference type="HOGENOM" id="CLU_069765_3_2_10"/>
<dbReference type="OrthoDB" id="5295945at2"/>
<dbReference type="UniPathway" id="UPA00253">
    <property type="reaction ID" value="UER00332"/>
</dbReference>
<dbReference type="GO" id="GO:0005524">
    <property type="term" value="F:ATP binding"/>
    <property type="evidence" value="ECO:0007669"/>
    <property type="project" value="UniProtKB-KW"/>
</dbReference>
<dbReference type="GO" id="GO:0004515">
    <property type="term" value="F:nicotinate-nucleotide adenylyltransferase activity"/>
    <property type="evidence" value="ECO:0007669"/>
    <property type="project" value="UniProtKB-UniRule"/>
</dbReference>
<dbReference type="GO" id="GO:0009435">
    <property type="term" value="P:NAD biosynthetic process"/>
    <property type="evidence" value="ECO:0007669"/>
    <property type="project" value="UniProtKB-UniRule"/>
</dbReference>
<dbReference type="CDD" id="cd02165">
    <property type="entry name" value="NMNAT"/>
    <property type="match status" value="1"/>
</dbReference>
<dbReference type="Gene3D" id="3.40.50.620">
    <property type="entry name" value="HUPs"/>
    <property type="match status" value="1"/>
</dbReference>
<dbReference type="HAMAP" id="MF_00244">
    <property type="entry name" value="NaMN_adenylyltr"/>
    <property type="match status" value="1"/>
</dbReference>
<dbReference type="InterPro" id="IPR004821">
    <property type="entry name" value="Cyt_trans-like"/>
</dbReference>
<dbReference type="InterPro" id="IPR005248">
    <property type="entry name" value="NadD/NMNAT"/>
</dbReference>
<dbReference type="InterPro" id="IPR014729">
    <property type="entry name" value="Rossmann-like_a/b/a_fold"/>
</dbReference>
<dbReference type="NCBIfam" id="TIGR00125">
    <property type="entry name" value="cyt_tran_rel"/>
    <property type="match status" value="1"/>
</dbReference>
<dbReference type="NCBIfam" id="TIGR00482">
    <property type="entry name" value="nicotinate (nicotinamide) nucleotide adenylyltransferase"/>
    <property type="match status" value="1"/>
</dbReference>
<dbReference type="PANTHER" id="PTHR39321">
    <property type="entry name" value="NICOTINATE-NUCLEOTIDE ADENYLYLTRANSFERASE-RELATED"/>
    <property type="match status" value="1"/>
</dbReference>
<dbReference type="PANTHER" id="PTHR39321:SF3">
    <property type="entry name" value="PHOSPHOPANTETHEINE ADENYLYLTRANSFERASE"/>
    <property type="match status" value="1"/>
</dbReference>
<dbReference type="Pfam" id="PF01467">
    <property type="entry name" value="CTP_transf_like"/>
    <property type="match status" value="1"/>
</dbReference>
<dbReference type="SUPFAM" id="SSF52374">
    <property type="entry name" value="Nucleotidylyl transferase"/>
    <property type="match status" value="1"/>
</dbReference>
<accession>A4SGY4</accession>
<protein>
    <recommendedName>
        <fullName evidence="1">Probable nicotinate-nucleotide adenylyltransferase</fullName>
        <ecNumber evidence="1">2.7.7.18</ecNumber>
    </recommendedName>
    <alternativeName>
        <fullName evidence="1">Deamido-NAD(+) diphosphorylase</fullName>
    </alternativeName>
    <alternativeName>
        <fullName evidence="1">Deamido-NAD(+) pyrophosphorylase</fullName>
    </alternativeName>
    <alternativeName>
        <fullName evidence="1">Nicotinate mononucleotide adenylyltransferase</fullName>
        <shortName evidence="1">NaMN adenylyltransferase</shortName>
    </alternativeName>
</protein>
<evidence type="ECO:0000255" key="1">
    <source>
        <dbReference type="HAMAP-Rule" id="MF_00244"/>
    </source>
</evidence>
<reference key="1">
    <citation type="submission" date="2007-03" db="EMBL/GenBank/DDBJ databases">
        <title>Complete sequence of Prosthecochloris vibrioformis DSM 265.</title>
        <authorList>
            <consortium name="US DOE Joint Genome Institute"/>
            <person name="Copeland A."/>
            <person name="Lucas S."/>
            <person name="Lapidus A."/>
            <person name="Barry K."/>
            <person name="Detter J.C."/>
            <person name="Glavina del Rio T."/>
            <person name="Hammon N."/>
            <person name="Israni S."/>
            <person name="Pitluck S."/>
            <person name="Schmutz J."/>
            <person name="Larimer F."/>
            <person name="Land M."/>
            <person name="Hauser L."/>
            <person name="Mikhailova N."/>
            <person name="Li T."/>
            <person name="Overmann J."/>
            <person name="Schuster S.C."/>
            <person name="Bryant D.A."/>
            <person name="Richardson P."/>
        </authorList>
    </citation>
    <scope>NUCLEOTIDE SEQUENCE [LARGE SCALE GENOMIC DNA]</scope>
    <source>
        <strain>DSM 265 / 1930</strain>
    </source>
</reference>
<keyword id="KW-0067">ATP-binding</keyword>
<keyword id="KW-0520">NAD</keyword>
<keyword id="KW-0547">Nucleotide-binding</keyword>
<keyword id="KW-0548">Nucleotidyltransferase</keyword>
<keyword id="KW-0662">Pyridine nucleotide biosynthesis</keyword>
<keyword id="KW-0808">Transferase</keyword>
<feature type="chain" id="PRO_1000078388" description="Probable nicotinate-nucleotide adenylyltransferase">
    <location>
        <begin position="1"/>
        <end position="193"/>
    </location>
</feature>
<proteinExistence type="inferred from homology"/>
<comment type="function">
    <text evidence="1">Catalyzes the reversible adenylation of nicotinate mononucleotide (NaMN) to nicotinic acid adenine dinucleotide (NaAD).</text>
</comment>
<comment type="catalytic activity">
    <reaction evidence="1">
        <text>nicotinate beta-D-ribonucleotide + ATP + H(+) = deamido-NAD(+) + diphosphate</text>
        <dbReference type="Rhea" id="RHEA:22860"/>
        <dbReference type="ChEBI" id="CHEBI:15378"/>
        <dbReference type="ChEBI" id="CHEBI:30616"/>
        <dbReference type="ChEBI" id="CHEBI:33019"/>
        <dbReference type="ChEBI" id="CHEBI:57502"/>
        <dbReference type="ChEBI" id="CHEBI:58437"/>
        <dbReference type="EC" id="2.7.7.18"/>
    </reaction>
</comment>
<comment type="pathway">
    <text evidence="1">Cofactor biosynthesis; NAD(+) biosynthesis; deamido-NAD(+) from nicotinate D-ribonucleotide: step 1/1.</text>
</comment>
<comment type="similarity">
    <text evidence="1">Belongs to the NadD family.</text>
</comment>
<gene>
    <name evidence="1" type="primary">nadD</name>
    <name type="ordered locus">Cvib_1733</name>
</gene>
<organism>
    <name type="scientific">Chlorobium phaeovibrioides (strain DSM 265 / 1930)</name>
    <name type="common">Prosthecochloris vibrioformis (strain DSM 265)</name>
    <dbReference type="NCBI Taxonomy" id="290318"/>
    <lineage>
        <taxon>Bacteria</taxon>
        <taxon>Pseudomonadati</taxon>
        <taxon>Chlorobiota</taxon>
        <taxon>Chlorobiia</taxon>
        <taxon>Chlorobiales</taxon>
        <taxon>Chlorobiaceae</taxon>
        <taxon>Chlorobium/Pelodictyon group</taxon>
        <taxon>Chlorobium</taxon>
    </lineage>
</organism>